<accession>P0C5F7</accession>
<evidence type="ECO:0000250" key="1"/>
<evidence type="ECO:0000250" key="2">
    <source>
        <dbReference type="UniProtKB" id="P01530"/>
    </source>
</evidence>
<evidence type="ECO:0000269" key="3">
    <source>
    </source>
</evidence>
<evidence type="ECO:0000303" key="4">
    <source>
    </source>
</evidence>
<evidence type="ECO:0000303" key="5">
    <source>
    </source>
</evidence>
<evidence type="ECO:0000305" key="6"/>
<proteinExistence type="evidence at transcript level"/>
<dbReference type="SMR" id="P0C5F7"/>
<dbReference type="GO" id="GO:0005576">
    <property type="term" value="C:extracellular region"/>
    <property type="evidence" value="ECO:0007669"/>
    <property type="project" value="UniProtKB-SubCell"/>
</dbReference>
<dbReference type="GO" id="GO:0042151">
    <property type="term" value="C:nematocyst"/>
    <property type="evidence" value="ECO:0007669"/>
    <property type="project" value="UniProtKB-SubCell"/>
</dbReference>
<dbReference type="GO" id="GO:0017080">
    <property type="term" value="F:sodium channel regulator activity"/>
    <property type="evidence" value="ECO:0007669"/>
    <property type="project" value="UniProtKB-KW"/>
</dbReference>
<dbReference type="GO" id="GO:0090729">
    <property type="term" value="F:toxin activity"/>
    <property type="evidence" value="ECO:0007669"/>
    <property type="project" value="UniProtKB-KW"/>
</dbReference>
<dbReference type="GO" id="GO:0009966">
    <property type="term" value="P:regulation of signal transduction"/>
    <property type="evidence" value="ECO:0007669"/>
    <property type="project" value="InterPro"/>
</dbReference>
<dbReference type="Gene3D" id="2.20.20.10">
    <property type="entry name" value="Anthopleurin-A"/>
    <property type="match status" value="1"/>
</dbReference>
<dbReference type="InterPro" id="IPR000693">
    <property type="entry name" value="Anenome_toxin"/>
</dbReference>
<dbReference type="InterPro" id="IPR023355">
    <property type="entry name" value="Myo_ane_neurotoxin_sf"/>
</dbReference>
<dbReference type="Pfam" id="PF00706">
    <property type="entry name" value="Toxin_4"/>
    <property type="match status" value="1"/>
</dbReference>
<dbReference type="PIRSF" id="PIRSF001905">
    <property type="entry name" value="Anenome_toxin"/>
    <property type="match status" value="1"/>
</dbReference>
<dbReference type="SUPFAM" id="SSF57392">
    <property type="entry name" value="Defensin-like"/>
    <property type="match status" value="1"/>
</dbReference>
<keyword id="KW-0123">Cardiotoxin</keyword>
<keyword id="KW-1015">Disulfide bond</keyword>
<keyword id="KW-0872">Ion channel impairing toxin</keyword>
<keyword id="KW-0166">Nematocyst</keyword>
<keyword id="KW-0528">Neurotoxin</keyword>
<keyword id="KW-0964">Secreted</keyword>
<keyword id="KW-0800">Toxin</keyword>
<keyword id="KW-0738">Voltage-gated sodium channel impairing toxin</keyword>
<name>NA116_ANTS7</name>
<reference key="1">
    <citation type="journal article" date="2004" name="Biochem. Biophys. Res. Commun.">
        <title>Functional expression and characterization of four novel neurotoxins from sea anemone Anthopleura sp.</title>
        <authorList>
            <person name="Wang L."/>
            <person name="Ou J."/>
            <person name="Peng L."/>
            <person name="Zhong X."/>
            <person name="Du J."/>
            <person name="Liu Y."/>
            <person name="Huang Y."/>
            <person name="Liu W."/>
            <person name="Zhang Y."/>
            <person name="Dong M."/>
            <person name="Xu A.-L."/>
        </authorList>
    </citation>
    <scope>NUCLEOTIDE SEQUENCE [MRNA]</scope>
    <scope>FUNCTION</scope>
    <source>
        <tissue>Tentacle</tissue>
    </source>
</reference>
<reference key="2">
    <citation type="journal article" date="2012" name="Toxicon">
        <title>Development of a rational nomenclature for naming peptide and protein toxins from sea anemones.</title>
        <authorList>
            <person name="Oliveira J.S."/>
            <person name="Fuentes-Silva D."/>
            <person name="King G.F."/>
        </authorList>
    </citation>
    <scope>NOMENCLATURE</scope>
</reference>
<sequence length="47" mass="4948">GVPCLCDSDGPSVRGNTLSGTLWLFGCPSGWHNCKAHGPTIGWCCKK</sequence>
<protein>
    <recommendedName>
        <fullName evidence="5">Delta-actitoxin-Aspp1d</fullName>
        <shortName evidence="5">Delta-AITX-Aspp1d</shortName>
    </recommendedName>
    <alternativeName>
        <fullName evidence="4">Toxin Hk16a</fullName>
    </alternativeName>
</protein>
<feature type="chain" id="PRO_0000305111" description="Delta-actitoxin-Aspp1d">
    <location>
        <begin position="1"/>
        <end position="47"/>
    </location>
</feature>
<feature type="disulfide bond" evidence="2">
    <location>
        <begin position="4"/>
        <end position="44"/>
    </location>
</feature>
<feature type="disulfide bond" evidence="2">
    <location>
        <begin position="6"/>
        <end position="34"/>
    </location>
</feature>
<feature type="disulfide bond" evidence="2">
    <location>
        <begin position="27"/>
        <end position="45"/>
    </location>
</feature>
<organism>
    <name type="scientific">Anthopleura sp. (strain 'Zhanjiang')</name>
    <name type="common">Sea anemone</name>
    <dbReference type="NCBI Taxonomy" id="462333"/>
    <lineage>
        <taxon>Eukaryota</taxon>
        <taxon>Metazoa</taxon>
        <taxon>Cnidaria</taxon>
        <taxon>Anthozoa</taxon>
        <taxon>Hexacorallia</taxon>
        <taxon>Actiniaria</taxon>
        <taxon>Actiniidae</taxon>
        <taxon>Anthopleura</taxon>
    </lineage>
</organism>
<comment type="function">
    <text evidence="1 3">Binds specifically to voltage-gated sodium channels (Nav), thereby delaying their inactivation during signal transduction (By similarity). Stimulates mammalian heart contraction (PubMed:14672713).</text>
</comment>
<comment type="subcellular location">
    <subcellularLocation>
        <location evidence="6">Secreted</location>
    </subcellularLocation>
    <subcellularLocation>
        <location evidence="6">Nematocyst</location>
    </subcellularLocation>
</comment>
<comment type="similarity">
    <text evidence="6">Belongs to the sea anemone sodium channel inhibitory toxin family. Type I subfamily.</text>
</comment>